<comment type="function">
    <text evidence="1">One of several proteins that assist in the late maturation steps of the functional core of the 30S ribosomal subunit. Associates with free 30S ribosomal subunits (but not with 30S subunits that are part of 70S ribosomes or polysomes). Required for efficient processing of 16S rRNA. May interact with the 5'-terminal helix region of 16S rRNA.</text>
</comment>
<comment type="subunit">
    <text evidence="1">Monomer. Binds 30S ribosomal subunits, but not 50S ribosomal subunits or 70S ribosomes.</text>
</comment>
<comment type="subcellular location">
    <subcellularLocation>
        <location evidence="1">Cytoplasm</location>
    </subcellularLocation>
</comment>
<comment type="similarity">
    <text evidence="1">Belongs to the RbfA family.</text>
</comment>
<feature type="chain" id="PRO_1000057025" description="Ribosome-binding factor A">
    <location>
        <begin position="1"/>
        <end position="119"/>
    </location>
</feature>
<gene>
    <name evidence="1" type="primary">rbfA</name>
    <name type="ordered locus">Tlet_1378</name>
</gene>
<name>RBFA_PSELT</name>
<dbReference type="EMBL" id="CP000812">
    <property type="protein sequence ID" value="ABV33935.1"/>
    <property type="molecule type" value="Genomic_DNA"/>
</dbReference>
<dbReference type="RefSeq" id="WP_012003411.1">
    <property type="nucleotide sequence ID" value="NZ_BSDV01000001.1"/>
</dbReference>
<dbReference type="SMR" id="A8F701"/>
<dbReference type="STRING" id="416591.Tlet_1378"/>
<dbReference type="KEGG" id="tle:Tlet_1378"/>
<dbReference type="eggNOG" id="COG0858">
    <property type="taxonomic scope" value="Bacteria"/>
</dbReference>
<dbReference type="HOGENOM" id="CLU_089475_6_5_0"/>
<dbReference type="OrthoDB" id="46605at2"/>
<dbReference type="Proteomes" id="UP000002016">
    <property type="component" value="Chromosome"/>
</dbReference>
<dbReference type="GO" id="GO:0005829">
    <property type="term" value="C:cytosol"/>
    <property type="evidence" value="ECO:0007669"/>
    <property type="project" value="TreeGrafter"/>
</dbReference>
<dbReference type="GO" id="GO:0043024">
    <property type="term" value="F:ribosomal small subunit binding"/>
    <property type="evidence" value="ECO:0007669"/>
    <property type="project" value="TreeGrafter"/>
</dbReference>
<dbReference type="GO" id="GO:0030490">
    <property type="term" value="P:maturation of SSU-rRNA"/>
    <property type="evidence" value="ECO:0007669"/>
    <property type="project" value="UniProtKB-UniRule"/>
</dbReference>
<dbReference type="Gene3D" id="3.30.300.20">
    <property type="match status" value="1"/>
</dbReference>
<dbReference type="HAMAP" id="MF_00003">
    <property type="entry name" value="RbfA"/>
    <property type="match status" value="1"/>
</dbReference>
<dbReference type="InterPro" id="IPR015946">
    <property type="entry name" value="KH_dom-like_a/b"/>
</dbReference>
<dbReference type="InterPro" id="IPR000238">
    <property type="entry name" value="RbfA"/>
</dbReference>
<dbReference type="InterPro" id="IPR023799">
    <property type="entry name" value="RbfA_dom_sf"/>
</dbReference>
<dbReference type="InterPro" id="IPR020053">
    <property type="entry name" value="Ribosome-bd_factorA_CS"/>
</dbReference>
<dbReference type="NCBIfam" id="TIGR00082">
    <property type="entry name" value="rbfA"/>
    <property type="match status" value="1"/>
</dbReference>
<dbReference type="PANTHER" id="PTHR33515">
    <property type="entry name" value="RIBOSOME-BINDING FACTOR A, CHLOROPLASTIC-RELATED"/>
    <property type="match status" value="1"/>
</dbReference>
<dbReference type="PANTHER" id="PTHR33515:SF1">
    <property type="entry name" value="RIBOSOME-BINDING FACTOR A, CHLOROPLASTIC-RELATED"/>
    <property type="match status" value="1"/>
</dbReference>
<dbReference type="Pfam" id="PF02033">
    <property type="entry name" value="RBFA"/>
    <property type="match status" value="1"/>
</dbReference>
<dbReference type="SUPFAM" id="SSF89919">
    <property type="entry name" value="Ribosome-binding factor A, RbfA"/>
    <property type="match status" value="1"/>
</dbReference>
<dbReference type="PROSITE" id="PS01319">
    <property type="entry name" value="RBFA"/>
    <property type="match status" value="1"/>
</dbReference>
<organism>
    <name type="scientific">Pseudothermotoga lettingae (strain ATCC BAA-301 / DSM 14385 / NBRC 107922 / TMO)</name>
    <name type="common">Thermotoga lettingae</name>
    <dbReference type="NCBI Taxonomy" id="416591"/>
    <lineage>
        <taxon>Bacteria</taxon>
        <taxon>Thermotogati</taxon>
        <taxon>Thermotogota</taxon>
        <taxon>Thermotogae</taxon>
        <taxon>Thermotogales</taxon>
        <taxon>Thermotogaceae</taxon>
        <taxon>Pseudothermotoga</taxon>
    </lineage>
</organism>
<sequence>MRPDYRKAMLESEIMKLITEALREAKDPKISGQIITISRVELSNDKRFADVYVSAMGDKDERVKTVEYLDKIKGYFRTYLANNLDLYTAPQIRFKEDPGIEASVRIQELLNKIKEEETQ</sequence>
<protein>
    <recommendedName>
        <fullName evidence="1">Ribosome-binding factor A</fullName>
    </recommendedName>
</protein>
<keyword id="KW-0963">Cytoplasm</keyword>
<keyword id="KW-1185">Reference proteome</keyword>
<keyword id="KW-0690">Ribosome biogenesis</keyword>
<reference key="1">
    <citation type="submission" date="2007-08" db="EMBL/GenBank/DDBJ databases">
        <title>Complete sequence of Thermotoga lettingae TMO.</title>
        <authorList>
            <consortium name="US DOE Joint Genome Institute"/>
            <person name="Copeland A."/>
            <person name="Lucas S."/>
            <person name="Lapidus A."/>
            <person name="Barry K."/>
            <person name="Glavina del Rio T."/>
            <person name="Dalin E."/>
            <person name="Tice H."/>
            <person name="Pitluck S."/>
            <person name="Foster B."/>
            <person name="Bruce D."/>
            <person name="Schmutz J."/>
            <person name="Larimer F."/>
            <person name="Land M."/>
            <person name="Hauser L."/>
            <person name="Kyrpides N."/>
            <person name="Mikhailova N."/>
            <person name="Nelson K."/>
            <person name="Gogarten J.P."/>
            <person name="Noll K."/>
            <person name="Richardson P."/>
        </authorList>
    </citation>
    <scope>NUCLEOTIDE SEQUENCE [LARGE SCALE GENOMIC DNA]</scope>
    <source>
        <strain>ATCC BAA-301 / DSM 14385 / NBRC 107922 / TMO</strain>
    </source>
</reference>
<accession>A8F701</accession>
<proteinExistence type="inferred from homology"/>
<evidence type="ECO:0000255" key="1">
    <source>
        <dbReference type="HAMAP-Rule" id="MF_00003"/>
    </source>
</evidence>